<accession>Q8JMZ5</accession>
<organism>
    <name type="scientific">Hepatitis B virus genotype H subtype adw4 (isolate Nicaragua/2928Nic/1997)</name>
    <name type="common">HBV-H</name>
    <dbReference type="NCBI Taxonomy" id="489541"/>
    <lineage>
        <taxon>Viruses</taxon>
        <taxon>Riboviria</taxon>
        <taxon>Pararnavirae</taxon>
        <taxon>Artverviricota</taxon>
        <taxon>Revtraviricetes</taxon>
        <taxon>Blubervirales</taxon>
        <taxon>Hepadnaviridae</taxon>
        <taxon>Orthohepadnavirus</taxon>
        <taxon>Hepatitis B virus</taxon>
        <taxon>hepatitis B virus genotype H</taxon>
    </lineage>
</organism>
<proteinExistence type="inferred from homology"/>
<dbReference type="EMBL" id="AY090457">
    <property type="protein sequence ID" value="AAM09050.1"/>
    <property type="molecule type" value="Genomic_DNA"/>
</dbReference>
<dbReference type="SMR" id="Q8JMZ5"/>
<dbReference type="Proteomes" id="UP000007409">
    <property type="component" value="Segment"/>
</dbReference>
<dbReference type="GO" id="GO:0033650">
    <property type="term" value="C:host cell mitochondrion"/>
    <property type="evidence" value="ECO:0007669"/>
    <property type="project" value="UniProtKB-SubCell"/>
</dbReference>
<dbReference type="GO" id="GO:0042025">
    <property type="term" value="C:host cell nucleus"/>
    <property type="evidence" value="ECO:0007669"/>
    <property type="project" value="UniProtKB-SubCell"/>
</dbReference>
<dbReference type="GO" id="GO:0006351">
    <property type="term" value="P:DNA-templated transcription"/>
    <property type="evidence" value="ECO:0007669"/>
    <property type="project" value="UniProtKB-UniRule"/>
</dbReference>
<dbReference type="GO" id="GO:0085033">
    <property type="term" value="P:symbiont-mediated activation of host NF-kappaB cascade"/>
    <property type="evidence" value="ECO:0007669"/>
    <property type="project" value="UniProtKB-UniRule"/>
</dbReference>
<dbReference type="GO" id="GO:0039592">
    <property type="term" value="P:symbiont-mediated arrest of host cell cycle during G2/M transition"/>
    <property type="evidence" value="ECO:0007669"/>
    <property type="project" value="UniProtKB-UniRule"/>
</dbReference>
<dbReference type="GO" id="GO:0019079">
    <property type="term" value="P:viral genome replication"/>
    <property type="evidence" value="ECO:0007669"/>
    <property type="project" value="UniProtKB-UniRule"/>
</dbReference>
<dbReference type="HAMAP" id="MF_04074">
    <property type="entry name" value="HBV_X"/>
    <property type="match status" value="1"/>
</dbReference>
<dbReference type="InterPro" id="IPR000236">
    <property type="entry name" value="Transactivation_prot_X"/>
</dbReference>
<dbReference type="Pfam" id="PF00739">
    <property type="entry name" value="X"/>
    <property type="match status" value="1"/>
</dbReference>
<reference key="1">
    <citation type="journal article" date="2002" name="J. Gen. Virol.">
        <title>Genotype H: a new Amerindian genotype of hepatitis B virus revealed in Central America.</title>
        <authorList>
            <person name="Arauz-Ruiz P."/>
            <person name="Norder H."/>
            <person name="Robertson B.H."/>
            <person name="Magnius L.O."/>
        </authorList>
    </citation>
    <scope>NUCLEOTIDE SEQUENCE [GENOMIC DNA]</scope>
</reference>
<reference key="2">
    <citation type="journal article" date="2004" name="J. Virol.">
        <title>The enigmatic X gene of hepatitis B virus.</title>
        <authorList>
            <person name="Bouchard M.J."/>
            <person name="Schneider R.J."/>
        </authorList>
    </citation>
    <scope>REVIEW</scope>
</reference>
<reference key="3">
    <citation type="journal article" date="2006" name="Cancer Sci.">
        <title>Molecular functions and biological roles of hepatitis B virus x protein.</title>
        <authorList>
            <person name="Tang H."/>
            <person name="Oishi N."/>
            <person name="Kaneko S."/>
            <person name="Murakami S."/>
        </authorList>
    </citation>
    <scope>REVIEW</scope>
</reference>
<feature type="chain" id="PRO_0000319924" description="Protein X">
    <location>
        <begin position="1"/>
        <end position="154"/>
    </location>
</feature>
<feature type="region of interest" description="Mitochondrial targeting sequence" evidence="1">
    <location>
        <begin position="68"/>
        <end position="117"/>
    </location>
</feature>
<evidence type="ECO:0000255" key="1">
    <source>
        <dbReference type="HAMAP-Rule" id="MF_04074"/>
    </source>
</evidence>
<name>X_HBVH3</name>
<sequence>MAARLCCQLDPARDVLCLRPVGAESCGRPLSWSPGALPPPSPPSVPADDGSHLSLRGLPACAFSSAGPCALRFTSARRMETTVNAPQSLPTTLHKRTLGLSPRSTTWIEEYIKDCVFKDWEESGEELRLKVFVLGGCRHKLVCSPAPCNFFTSA</sequence>
<gene>
    <name evidence="1" type="primary">X</name>
</gene>
<comment type="function">
    <text evidence="1">Multifunctional protein that plays a role in silencing host antiviral defenses and promoting viral transcription. Does not seem to be essential for HBV infection. May be directly involved in development of cirrhosis and liver cancer (hepatocellular carcinoma). Most of cytosolic activities involve modulation of cytosolic calcium. The effect on apoptosis is controversial depending on the cell types in which the studies have been conducted. May induce apoptosis by localizing in mitochondria and causing loss of mitochondrial membrane potential. May also modulate apoptosis by binding host CFLAR, a key regulator of the death-inducing signaling complex (DISC). Promotes viral transcription by using the host E3 ubiquitin ligase DDB1 to target the SMC5-SMC6 complex to proteasomal degradation. This host complex would otherwise bind to viral episomal DNA, and prevents its transcription. Moderately stimulates transcription of many different viral and cellular transcription elements. Promoters and enhancers stimulated by HBx contain DNA binding sites for NF-kappa-B, AP-1, AP-2, c-EBP, ATF/CREB, or the calcium-activated factor NF-AT.</text>
</comment>
<comment type="subunit">
    <text evidence="1">May form homodimer. May interact with host CEBPA, CFLAR, CREB1, DDB1, E4F1, HBXIP, HSPD1/HSP60, NFKBIA, POLR2E and SMAD4. Interacts with host SMC5-SMC6 complex and induces its degradation. Interacts with host TRPC4AP; leading to prevent ubiquitination of TRPC4AP. Interacts with host PLSCR1; this interaction promotes ubiquitination and degradation of HBx and impairs HBx-mediated cell proliferation.</text>
</comment>
<comment type="subcellular location">
    <subcellularLocation>
        <location evidence="1">Host cytoplasm</location>
    </subcellularLocation>
    <subcellularLocation>
        <location evidence="1">Host nucleus</location>
    </subcellularLocation>
    <subcellularLocation>
        <location evidence="1">Host mitochondrion</location>
    </subcellularLocation>
    <text evidence="1">Mainly cytoplasmic as only a fraction is detected in the nucleus. In cytoplasm, a minor fraction associates with mitochondria or proteasomes.</text>
</comment>
<comment type="PTM">
    <text evidence="1">A fraction may be phosphorylated in insect cells and HepG2 cells, a human hepatoblastoma cell line. Phosphorylated in vitro by host protein kinase C or mitogen-activated protein kinase. N-acetylated in insect cells.</text>
</comment>
<comment type="similarity">
    <text evidence="1">Belongs to the orthohepadnavirus protein X family.</text>
</comment>
<comment type="caution">
    <text>Transcriptional activities should be taken with a grain of salt. As of 2007, all studies demonstrating in vivo interaction between protein X and transcriptional components were performed with significant overexpression of both proteins and in the absence of viral infection.</text>
</comment>
<protein>
    <recommendedName>
        <fullName evidence="1">Protein X</fullName>
    </recommendedName>
    <alternativeName>
        <fullName evidence="1">HBx</fullName>
    </alternativeName>
    <alternativeName>
        <fullName evidence="1">Peptide X</fullName>
    </alternativeName>
    <alternativeName>
        <fullName evidence="1">pX</fullName>
    </alternativeName>
</protein>
<organismHost>
    <name type="scientific">Homo sapiens</name>
    <name type="common">Human</name>
    <dbReference type="NCBI Taxonomy" id="9606"/>
</organismHost>
<organismHost>
    <name type="scientific">Pan troglodytes</name>
    <name type="common">Chimpanzee</name>
    <dbReference type="NCBI Taxonomy" id="9598"/>
</organismHost>
<keyword id="KW-1074">Activation of host NF-kappa-B by virus</keyword>
<keyword id="KW-0010">Activator</keyword>
<keyword id="KW-0053">Apoptosis</keyword>
<keyword id="KW-1035">Host cytoplasm</keyword>
<keyword id="KW-1079">Host G2/M cell cycle arrest by virus</keyword>
<keyword id="KW-1045">Host mitochondrion</keyword>
<keyword id="KW-1048">Host nucleus</keyword>
<keyword id="KW-0945">Host-virus interaction</keyword>
<keyword id="KW-1121">Modulation of host cell cycle by virus</keyword>
<keyword id="KW-0804">Transcription</keyword>
<keyword id="KW-0805">Transcription regulation</keyword>